<proteinExistence type="inferred from homology"/>
<protein>
    <recommendedName>
        <fullName>General transcription factor IIE subunit 1</fullName>
    </recommendedName>
    <alternativeName>
        <fullName>Transcription initiation factor IIE subunit alpha</fullName>
        <shortName>TFIIE-alpha</shortName>
    </alternativeName>
</protein>
<evidence type="ECO:0000250" key="1"/>
<evidence type="ECO:0000255" key="2"/>
<evidence type="ECO:0000255" key="3">
    <source>
        <dbReference type="PROSITE-ProRule" id="PRU00676"/>
    </source>
</evidence>
<evidence type="ECO:0000256" key="4">
    <source>
        <dbReference type="SAM" id="MobiDB-lite"/>
    </source>
</evidence>
<evidence type="ECO:0000305" key="5"/>
<reference key="1">
    <citation type="journal article" date="2002" name="Nature">
        <title>Sequence and analysis of chromosome 2 of Dictyostelium discoideum.</title>
        <authorList>
            <person name="Gloeckner G."/>
            <person name="Eichinger L."/>
            <person name="Szafranski K."/>
            <person name="Pachebat J.A."/>
            <person name="Bankier A.T."/>
            <person name="Dear P.H."/>
            <person name="Lehmann R."/>
            <person name="Baumgart C."/>
            <person name="Parra G."/>
            <person name="Abril J.F."/>
            <person name="Guigo R."/>
            <person name="Kumpf K."/>
            <person name="Tunggal B."/>
            <person name="Cox E.C."/>
            <person name="Quail M.A."/>
            <person name="Platzer M."/>
            <person name="Rosenthal A."/>
            <person name="Noegel A.A."/>
        </authorList>
    </citation>
    <scope>NUCLEOTIDE SEQUENCE [LARGE SCALE GENOMIC DNA] (GTF2E1-1 AND GTF2E1-2)</scope>
    <source>
        <strain>AX4</strain>
    </source>
</reference>
<reference key="2">
    <citation type="journal article" date="2005" name="Nature">
        <title>The genome of the social amoeba Dictyostelium discoideum.</title>
        <authorList>
            <person name="Eichinger L."/>
            <person name="Pachebat J.A."/>
            <person name="Gloeckner G."/>
            <person name="Rajandream M.A."/>
            <person name="Sucgang R."/>
            <person name="Berriman M."/>
            <person name="Song J."/>
            <person name="Olsen R."/>
            <person name="Szafranski K."/>
            <person name="Xu Q."/>
            <person name="Tunggal B."/>
            <person name="Kummerfeld S."/>
            <person name="Madera M."/>
            <person name="Konfortov B.A."/>
            <person name="Rivero F."/>
            <person name="Bankier A.T."/>
            <person name="Lehmann R."/>
            <person name="Hamlin N."/>
            <person name="Davies R."/>
            <person name="Gaudet P."/>
            <person name="Fey P."/>
            <person name="Pilcher K."/>
            <person name="Chen G."/>
            <person name="Saunders D."/>
            <person name="Sodergren E.J."/>
            <person name="Davis P."/>
            <person name="Kerhornou A."/>
            <person name="Nie X."/>
            <person name="Hall N."/>
            <person name="Anjard C."/>
            <person name="Hemphill L."/>
            <person name="Bason N."/>
            <person name="Farbrother P."/>
            <person name="Desany B."/>
            <person name="Just E."/>
            <person name="Morio T."/>
            <person name="Rost R."/>
            <person name="Churcher C.M."/>
            <person name="Cooper J."/>
            <person name="Haydock S."/>
            <person name="van Driessche N."/>
            <person name="Cronin A."/>
            <person name="Goodhead I."/>
            <person name="Muzny D.M."/>
            <person name="Mourier T."/>
            <person name="Pain A."/>
            <person name="Lu M."/>
            <person name="Harper D."/>
            <person name="Lindsay R."/>
            <person name="Hauser H."/>
            <person name="James K.D."/>
            <person name="Quiles M."/>
            <person name="Madan Babu M."/>
            <person name="Saito T."/>
            <person name="Buchrieser C."/>
            <person name="Wardroper A."/>
            <person name="Felder M."/>
            <person name="Thangavelu M."/>
            <person name="Johnson D."/>
            <person name="Knights A."/>
            <person name="Loulseged H."/>
            <person name="Mungall K.L."/>
            <person name="Oliver K."/>
            <person name="Price C."/>
            <person name="Quail M.A."/>
            <person name="Urushihara H."/>
            <person name="Hernandez J."/>
            <person name="Rabbinowitsch E."/>
            <person name="Steffen D."/>
            <person name="Sanders M."/>
            <person name="Ma J."/>
            <person name="Kohara Y."/>
            <person name="Sharp S."/>
            <person name="Simmonds M.N."/>
            <person name="Spiegler S."/>
            <person name="Tivey A."/>
            <person name="Sugano S."/>
            <person name="White B."/>
            <person name="Walker D."/>
            <person name="Woodward J.R."/>
            <person name="Winckler T."/>
            <person name="Tanaka Y."/>
            <person name="Shaulsky G."/>
            <person name="Schleicher M."/>
            <person name="Weinstock G.M."/>
            <person name="Rosenthal A."/>
            <person name="Cox E.C."/>
            <person name="Chisholm R.L."/>
            <person name="Gibbs R.A."/>
            <person name="Loomis W.F."/>
            <person name="Platzer M."/>
            <person name="Kay R.R."/>
            <person name="Williams J.G."/>
            <person name="Dear P.H."/>
            <person name="Noegel A.A."/>
            <person name="Barrell B.G."/>
            <person name="Kuspa A."/>
        </authorList>
    </citation>
    <scope>NUCLEOTIDE SEQUENCE [LARGE SCALE GENOMIC DNA] (GTF2E1-1 AND GTF2E1-2)</scope>
    <source>
        <strain>AX4</strain>
    </source>
</reference>
<organism>
    <name type="scientific">Dictyostelium discoideum</name>
    <name type="common">Social amoeba</name>
    <dbReference type="NCBI Taxonomy" id="44689"/>
    <lineage>
        <taxon>Eukaryota</taxon>
        <taxon>Amoebozoa</taxon>
        <taxon>Evosea</taxon>
        <taxon>Eumycetozoa</taxon>
        <taxon>Dictyostelia</taxon>
        <taxon>Dictyosteliales</taxon>
        <taxon>Dictyosteliaceae</taxon>
        <taxon>Dictyostelium</taxon>
    </lineage>
</organism>
<dbReference type="EMBL" id="AAFI02000010">
    <property type="protein sequence ID" value="EAL70717.1"/>
    <property type="molecule type" value="Genomic_DNA"/>
</dbReference>
<dbReference type="EMBL" id="AAFI02000010">
    <property type="protein sequence ID" value="EEU04133.1"/>
    <property type="molecule type" value="Genomic_DNA"/>
</dbReference>
<dbReference type="RefSeq" id="XP_002649185.1">
    <property type="nucleotide sequence ID" value="XM_002649139.1"/>
</dbReference>
<dbReference type="RefSeq" id="XP_644607.1">
    <property type="nucleotide sequence ID" value="XM_639515.1"/>
</dbReference>
<dbReference type="SMR" id="Q557M8"/>
<dbReference type="FunCoup" id="Q557M8">
    <property type="interactions" value="36"/>
</dbReference>
<dbReference type="STRING" id="44689.Q557M8"/>
<dbReference type="PaxDb" id="44689-DDB0231096"/>
<dbReference type="EnsemblProtists" id="EAL70717">
    <property type="protein sequence ID" value="EAL70717"/>
    <property type="gene ID" value="DDB_G0273525"/>
</dbReference>
<dbReference type="EnsemblProtists" id="EEU04133">
    <property type="protein sequence ID" value="EEU04133"/>
    <property type="gene ID" value="DDB_G0273583"/>
</dbReference>
<dbReference type="GeneID" id="8618971"/>
<dbReference type="GeneID" id="8619006"/>
<dbReference type="KEGG" id="ddi:DDB_G0273525"/>
<dbReference type="KEGG" id="ddi:DDB_G0273583"/>
<dbReference type="dictyBase" id="DDB_G0273525">
    <property type="gene designation" value="gtf2e1-1"/>
</dbReference>
<dbReference type="dictyBase" id="DDB_G0273583">
    <property type="gene designation" value="gtf2e1-2"/>
</dbReference>
<dbReference type="VEuPathDB" id="AmoebaDB:DDB_G0273583"/>
<dbReference type="eggNOG" id="KOG2593">
    <property type="taxonomic scope" value="Eukaryota"/>
</dbReference>
<dbReference type="HOGENOM" id="CLU_600546_0_0_1"/>
<dbReference type="InParanoid" id="Q557M8"/>
<dbReference type="OMA" id="FNIEICE"/>
<dbReference type="PhylomeDB" id="Q557M8"/>
<dbReference type="Reactome" id="R-DDI-674695">
    <property type="pathway name" value="RNA Polymerase II Pre-transcription Events"/>
</dbReference>
<dbReference type="Reactome" id="R-DDI-6807505">
    <property type="pathway name" value="RNA polymerase II transcribes snRNA genes"/>
</dbReference>
<dbReference type="Reactome" id="R-DDI-73776">
    <property type="pathway name" value="RNA Polymerase II Promoter Escape"/>
</dbReference>
<dbReference type="Reactome" id="R-DDI-73779">
    <property type="pathway name" value="RNA Polymerase II Transcription Pre-Initiation And Promoter Opening"/>
</dbReference>
<dbReference type="Reactome" id="R-DDI-75953">
    <property type="pathway name" value="RNA Polymerase II Transcription Initiation"/>
</dbReference>
<dbReference type="Reactome" id="R-DDI-76042">
    <property type="pathway name" value="RNA Polymerase II Transcription Initiation And Promoter Clearance"/>
</dbReference>
<dbReference type="PRO" id="PR:Q557M8"/>
<dbReference type="Proteomes" id="UP000002195">
    <property type="component" value="Chromosome 2"/>
</dbReference>
<dbReference type="GO" id="GO:0005673">
    <property type="term" value="C:transcription factor TFIIE complex"/>
    <property type="evidence" value="ECO:0000318"/>
    <property type="project" value="GO_Central"/>
</dbReference>
<dbReference type="GO" id="GO:0008270">
    <property type="term" value="F:zinc ion binding"/>
    <property type="evidence" value="ECO:0007669"/>
    <property type="project" value="UniProtKB-KW"/>
</dbReference>
<dbReference type="GO" id="GO:0006367">
    <property type="term" value="P:transcription initiation at RNA polymerase II promoter"/>
    <property type="evidence" value="ECO:0000318"/>
    <property type="project" value="GO_Central"/>
</dbReference>
<dbReference type="Gene3D" id="1.10.10.10">
    <property type="entry name" value="Winged helix-like DNA-binding domain superfamily/Winged helix DNA-binding domain"/>
    <property type="match status" value="1"/>
</dbReference>
<dbReference type="Gene3D" id="3.30.40.10">
    <property type="entry name" value="Zinc/RING finger domain, C3HC4 (zinc finger)"/>
    <property type="match status" value="1"/>
</dbReference>
<dbReference type="InterPro" id="IPR039997">
    <property type="entry name" value="TFE"/>
</dbReference>
<dbReference type="InterPro" id="IPR017919">
    <property type="entry name" value="TFIIE/TFIIEa_HTH"/>
</dbReference>
<dbReference type="InterPro" id="IPR002853">
    <property type="entry name" value="TFIIE_asu"/>
</dbReference>
<dbReference type="InterPro" id="IPR024550">
    <property type="entry name" value="TFIIEa/SarR/Rpc3_HTH_dom"/>
</dbReference>
<dbReference type="InterPro" id="IPR036388">
    <property type="entry name" value="WH-like_DNA-bd_sf"/>
</dbReference>
<dbReference type="InterPro" id="IPR036390">
    <property type="entry name" value="WH_DNA-bd_sf"/>
</dbReference>
<dbReference type="InterPro" id="IPR013083">
    <property type="entry name" value="Znf_RING/FYVE/PHD"/>
</dbReference>
<dbReference type="PANTHER" id="PTHR13097:SF7">
    <property type="entry name" value="GENERAL TRANSCRIPTION FACTOR IIE SUBUNIT 1"/>
    <property type="match status" value="1"/>
</dbReference>
<dbReference type="PANTHER" id="PTHR13097">
    <property type="entry name" value="TRANSCRIPTION INITIATION FACTOR IIE, ALPHA SUBUNIT"/>
    <property type="match status" value="1"/>
</dbReference>
<dbReference type="Pfam" id="PF02002">
    <property type="entry name" value="TFIIE_alpha"/>
    <property type="match status" value="1"/>
</dbReference>
<dbReference type="SMART" id="SM00531">
    <property type="entry name" value="TFIIE"/>
    <property type="match status" value="1"/>
</dbReference>
<dbReference type="SUPFAM" id="SSF46785">
    <property type="entry name" value="Winged helix' DNA-binding domain"/>
    <property type="match status" value="1"/>
</dbReference>
<dbReference type="SUPFAM" id="SSF57783">
    <property type="entry name" value="Zinc beta-ribbon"/>
    <property type="match status" value="1"/>
</dbReference>
<dbReference type="PROSITE" id="PS51344">
    <property type="entry name" value="HTH_TFE_IIE"/>
    <property type="match status" value="1"/>
</dbReference>
<keyword id="KW-0479">Metal-binding</keyword>
<keyword id="KW-0539">Nucleus</keyword>
<keyword id="KW-1185">Reference proteome</keyword>
<keyword id="KW-0804">Transcription</keyword>
<keyword id="KW-0805">Transcription regulation</keyword>
<keyword id="KW-0862">Zinc</keyword>
<keyword id="KW-0863">Zinc-finger</keyword>
<comment type="function">
    <text evidence="1">Recruits TFIIH to the initiation complex and stimulates the RNA polymerase II C-terminal domain kinase and DNA-dependent ATPase activities of TFIIH. Both TFIIH and TFIIE are required for promoter clearance by RNA polymerase (By similarity).</text>
</comment>
<comment type="subunit">
    <text evidence="1">TFIIE is a tetramer of two alpha and two beta subunits.</text>
</comment>
<comment type="subcellular location">
    <subcellularLocation>
        <location evidence="1">Nucleus</location>
    </subcellularLocation>
</comment>
<comment type="similarity">
    <text evidence="5">Belongs to the TFIIE alpha subunit family.</text>
</comment>
<comment type="caution">
    <text evidence="5">The gene for this protein is duplicated in strains AX3 and AX4. These strains contain a duplication of a segment of 750 kb of chromosome 2 compared to the corresponding sequence in strain AX2.</text>
</comment>
<sequence length="456" mass="51466">MSSSNNIYHILDDLVKMVIRAFYPDEYAVIIDGLLREKKRIKDEDLALRLRIQQKYVRKILMDLKGDSMVKSSDVKVEAKGPNERGSTHLLWYIDYKHIIDIVKYKLYMFRKKMESVKVQKIDVQTYKCQTCHKVYTALDIPKLLNMDTGALACEICDGELEEELNNESLTQTAKHQSDLFSQLRKIIEQLKKTEGHNIPLFARDLADLSADQGPSYTINTNSSLGMGPKPSAFPVAQGAATSHHIDPTNENIEFHVDILDTDGIEINKAVVKKENKKTGLASLPPWLLPSNSFKNRNVKSNSILNNNQQTQTSTNEQPTAVKEQIKIDQDFYINYIKTHYQEWESAPDSGDADGNGSNSGSGGSTIEGNDGGNGEHQNKKMKLDDSQTVSSMSQSDDDGKDILVRVGDNLIPITKITEHDQELMSNQEYEDYSHALYSYASKNVFDHQYQSLMSN</sequence>
<accession>Q557M8</accession>
<accession>C7FZY6</accession>
<accession>Q557J1</accession>
<accession>Q557J2</accession>
<accession>Q86AT7</accession>
<accession>Q86KI9</accession>
<feature type="chain" id="PRO_0000328289" description="General transcription factor IIE subunit 1">
    <location>
        <begin position="1"/>
        <end position="456"/>
    </location>
</feature>
<feature type="domain" description="HTH TFE/IIEalpha-type" evidence="3">
    <location>
        <begin position="11"/>
        <end position="100"/>
    </location>
</feature>
<feature type="zinc finger region" description="C4-type" evidence="2">
    <location>
        <begin position="129"/>
        <end position="157"/>
    </location>
</feature>
<feature type="region of interest" description="Disordered" evidence="4">
    <location>
        <begin position="345"/>
        <end position="402"/>
    </location>
</feature>
<feature type="compositionally biased region" description="Low complexity" evidence="4">
    <location>
        <begin position="347"/>
        <end position="357"/>
    </location>
</feature>
<feature type="compositionally biased region" description="Gly residues" evidence="4">
    <location>
        <begin position="358"/>
        <end position="375"/>
    </location>
</feature>
<feature type="compositionally biased region" description="Basic and acidic residues" evidence="4">
    <location>
        <begin position="377"/>
        <end position="386"/>
    </location>
</feature>
<name>T2EA_DICDI</name>
<gene>
    <name type="primary">gtf2e1-1</name>
    <name type="ORF">DDB_G0273525</name>
</gene>
<gene>
    <name type="primary">gtf2e1-2</name>
    <name type="ORF">DDB_G0273583</name>
</gene>